<proteinExistence type="inferred from homology"/>
<comment type="catalytic activity">
    <reaction evidence="1">
        <text>5-amino-1-(5-phospho-D-ribosyl)imidazole-4-carboxylate + L-aspartate + ATP = (2S)-2-[5-amino-1-(5-phospho-beta-D-ribosyl)imidazole-4-carboxamido]succinate + ADP + phosphate + 2 H(+)</text>
        <dbReference type="Rhea" id="RHEA:22628"/>
        <dbReference type="ChEBI" id="CHEBI:15378"/>
        <dbReference type="ChEBI" id="CHEBI:29991"/>
        <dbReference type="ChEBI" id="CHEBI:30616"/>
        <dbReference type="ChEBI" id="CHEBI:43474"/>
        <dbReference type="ChEBI" id="CHEBI:58443"/>
        <dbReference type="ChEBI" id="CHEBI:77657"/>
        <dbReference type="ChEBI" id="CHEBI:456216"/>
        <dbReference type="EC" id="6.3.2.6"/>
    </reaction>
</comment>
<comment type="pathway">
    <text evidence="1">Purine metabolism; IMP biosynthesis via de novo pathway; 5-amino-1-(5-phospho-D-ribosyl)imidazole-4-carboxamide from 5-amino-1-(5-phospho-D-ribosyl)imidazole-4-carboxylate: step 1/2.</text>
</comment>
<comment type="similarity">
    <text evidence="1">Belongs to the SAICAR synthetase family.</text>
</comment>
<feature type="chain" id="PRO_0000100802" description="Phosphoribosylaminoimidazole-succinocarboxamide synthase">
    <location>
        <begin position="1"/>
        <end position="314"/>
    </location>
</feature>
<organism>
    <name type="scientific">Bacteroides thetaiotaomicron (strain ATCC 29148 / DSM 2079 / JCM 5827 / CCUG 10774 / NCTC 10582 / VPI-5482 / E50)</name>
    <dbReference type="NCBI Taxonomy" id="226186"/>
    <lineage>
        <taxon>Bacteria</taxon>
        <taxon>Pseudomonadati</taxon>
        <taxon>Bacteroidota</taxon>
        <taxon>Bacteroidia</taxon>
        <taxon>Bacteroidales</taxon>
        <taxon>Bacteroidaceae</taxon>
        <taxon>Bacteroides</taxon>
    </lineage>
</organism>
<dbReference type="EC" id="6.3.2.6" evidence="1"/>
<dbReference type="EMBL" id="AE015928">
    <property type="protein sequence ID" value="AAO79322.1"/>
    <property type="molecule type" value="Genomic_DNA"/>
</dbReference>
<dbReference type="RefSeq" id="NP_813128.1">
    <property type="nucleotide sequence ID" value="NC_004663.1"/>
</dbReference>
<dbReference type="RefSeq" id="WP_008759891.1">
    <property type="nucleotide sequence ID" value="NZ_UYXG01000012.1"/>
</dbReference>
<dbReference type="SMR" id="Q8A004"/>
<dbReference type="FunCoup" id="Q8A004">
    <property type="interactions" value="479"/>
</dbReference>
<dbReference type="STRING" id="226186.BT_4217"/>
<dbReference type="PaxDb" id="226186-BT_4217"/>
<dbReference type="EnsemblBacteria" id="AAO79322">
    <property type="protein sequence ID" value="AAO79322"/>
    <property type="gene ID" value="BT_4217"/>
</dbReference>
<dbReference type="KEGG" id="bth:BT_4217"/>
<dbReference type="PATRIC" id="fig|226186.12.peg.4285"/>
<dbReference type="eggNOG" id="COG0152">
    <property type="taxonomic scope" value="Bacteria"/>
</dbReference>
<dbReference type="HOGENOM" id="CLU_045637_0_1_10"/>
<dbReference type="InParanoid" id="Q8A004"/>
<dbReference type="OrthoDB" id="9801549at2"/>
<dbReference type="UniPathway" id="UPA00074">
    <property type="reaction ID" value="UER00131"/>
</dbReference>
<dbReference type="Proteomes" id="UP000001414">
    <property type="component" value="Chromosome"/>
</dbReference>
<dbReference type="GO" id="GO:0005524">
    <property type="term" value="F:ATP binding"/>
    <property type="evidence" value="ECO:0007669"/>
    <property type="project" value="UniProtKB-KW"/>
</dbReference>
<dbReference type="GO" id="GO:0004639">
    <property type="term" value="F:phosphoribosylaminoimidazolesuccinocarboxamide synthase activity"/>
    <property type="evidence" value="ECO:0000318"/>
    <property type="project" value="GO_Central"/>
</dbReference>
<dbReference type="GO" id="GO:0006189">
    <property type="term" value="P:'de novo' IMP biosynthetic process"/>
    <property type="evidence" value="ECO:0000318"/>
    <property type="project" value="GO_Central"/>
</dbReference>
<dbReference type="CDD" id="cd01414">
    <property type="entry name" value="SAICAR_synt_Sc"/>
    <property type="match status" value="1"/>
</dbReference>
<dbReference type="FunFam" id="3.30.200.20:FF:000199">
    <property type="entry name" value="Phosphoribosylaminoimidazole-succinocarboxamide synthase"/>
    <property type="match status" value="1"/>
</dbReference>
<dbReference type="FunFam" id="3.30.470.20:FF:000015">
    <property type="entry name" value="Phosphoribosylaminoimidazole-succinocarboxamide synthase"/>
    <property type="match status" value="1"/>
</dbReference>
<dbReference type="Gene3D" id="3.30.470.20">
    <property type="entry name" value="ATP-grasp fold, B domain"/>
    <property type="match status" value="1"/>
</dbReference>
<dbReference type="Gene3D" id="3.30.200.20">
    <property type="entry name" value="Phosphorylase Kinase, domain 1"/>
    <property type="match status" value="1"/>
</dbReference>
<dbReference type="HAMAP" id="MF_00137">
    <property type="entry name" value="SAICAR_synth"/>
    <property type="match status" value="1"/>
</dbReference>
<dbReference type="InterPro" id="IPR028923">
    <property type="entry name" value="SAICAR_synt/ADE2_N"/>
</dbReference>
<dbReference type="InterPro" id="IPR018236">
    <property type="entry name" value="SAICAR_synthetase_CS"/>
</dbReference>
<dbReference type="NCBIfam" id="NF009251">
    <property type="entry name" value="PRK12607.1"/>
    <property type="match status" value="1"/>
</dbReference>
<dbReference type="NCBIfam" id="NF010568">
    <property type="entry name" value="PRK13961.1"/>
    <property type="match status" value="1"/>
</dbReference>
<dbReference type="PANTHER" id="PTHR43700">
    <property type="entry name" value="PHOSPHORIBOSYLAMINOIMIDAZOLE-SUCCINOCARBOXAMIDE SYNTHASE"/>
    <property type="match status" value="1"/>
</dbReference>
<dbReference type="PANTHER" id="PTHR43700:SF1">
    <property type="entry name" value="PHOSPHORIBOSYLAMINOIMIDAZOLE-SUCCINOCARBOXAMIDE SYNTHASE"/>
    <property type="match status" value="1"/>
</dbReference>
<dbReference type="Pfam" id="PF01259">
    <property type="entry name" value="SAICAR_synt"/>
    <property type="match status" value="1"/>
</dbReference>
<dbReference type="SUPFAM" id="SSF56104">
    <property type="entry name" value="SAICAR synthase-like"/>
    <property type="match status" value="1"/>
</dbReference>
<dbReference type="PROSITE" id="PS01058">
    <property type="entry name" value="SAICAR_SYNTHETASE_2"/>
    <property type="match status" value="1"/>
</dbReference>
<evidence type="ECO:0000255" key="1">
    <source>
        <dbReference type="HAMAP-Rule" id="MF_00137"/>
    </source>
</evidence>
<keyword id="KW-0067">ATP-binding</keyword>
<keyword id="KW-0436">Ligase</keyword>
<keyword id="KW-0547">Nucleotide-binding</keyword>
<keyword id="KW-0658">Purine biosynthesis</keyword>
<keyword id="KW-1185">Reference proteome</keyword>
<reference key="1">
    <citation type="journal article" date="2003" name="Science">
        <title>A genomic view of the human-Bacteroides thetaiotaomicron symbiosis.</title>
        <authorList>
            <person name="Xu J."/>
            <person name="Bjursell M.K."/>
            <person name="Himrod J."/>
            <person name="Deng S."/>
            <person name="Carmichael L.K."/>
            <person name="Chiang H.C."/>
            <person name="Hooper L.V."/>
            <person name="Gordon J.I."/>
        </authorList>
    </citation>
    <scope>NUCLEOTIDE SEQUENCE [LARGE SCALE GENOMIC DNA]</scope>
    <source>
        <strain>ATCC 29148 / DSM 2079 / JCM 5827 / CCUG 10774 / NCTC 10582 / VPI-5482 / E50</strain>
    </source>
</reference>
<protein>
    <recommendedName>
        <fullName evidence="1">Phosphoribosylaminoimidazole-succinocarboxamide synthase</fullName>
        <ecNumber evidence="1">6.3.2.6</ecNumber>
    </recommendedName>
    <alternativeName>
        <fullName evidence="1">SAICAR synthetase</fullName>
    </alternativeName>
</protein>
<sequence>MKALTKTDFNFPGQKSVYHGKVRDVYNINGEKLVMVATDRISAFDVVLPEGIPYKGQMLNQIAAKFLDATTDICPNWKMATPDPMVTVGVLCEGFPVEMIVRGYLCGSAWRTYKSGVREICGVKLPDGMRENEKFPEPIVTPTTKAEMGLHDEDISKEEILKQGLATPEEYETLEKYTLALFKRGTEIAAERGLILVDTKYEFGKHNGTIYLMDEIHTPDSSRYFYSDGYQERFEKGEPQKQLSKEFVREWLMENGFQGKDGQKVPEMTPAIVQSISDRYIELFENITGEKFVKEDTSNIAERIEKNVMNFLSK</sequence>
<gene>
    <name evidence="1" type="primary">purC</name>
    <name type="ordered locus">BT_4217</name>
</gene>
<accession>Q8A004</accession>
<name>PUR7_BACTN</name>